<evidence type="ECO:0000255" key="1">
    <source>
        <dbReference type="HAMAP-Rule" id="MF_01346"/>
    </source>
</evidence>
<reference key="1">
    <citation type="submission" date="2007-11" db="EMBL/GenBank/DDBJ databases">
        <title>The genome sequence of the hyperthermophilic bacterium Thermotoga neapolitana.</title>
        <authorList>
            <person name="Lim S.K."/>
            <person name="Kim J.S."/>
            <person name="Cha S.H."/>
            <person name="Park B.C."/>
            <person name="Lee D.S."/>
            <person name="Tae H.S."/>
            <person name="Kim S.-J."/>
            <person name="Kim J.J."/>
            <person name="Park K.J."/>
            <person name="Lee S.Y."/>
        </authorList>
    </citation>
    <scope>NUCLEOTIDE SEQUENCE [LARGE SCALE GENOMIC DNA]</scope>
    <source>
        <strain>ATCC 49049 / DSM 4359 / NBRC 107923 / NS-E</strain>
    </source>
</reference>
<sequence length="503" mass="56032">MRINPGEITKVLEEKIKSFEEKIDLEDTGKVIQVGDGIARVYGLNKVMVSELVEFVETGVKGVAFNLEEDNVGIIVLGEYKDIKEGHTVRRLKRIIEVPVGEELLGRVVNPLGEPLDGKGPINAKNFRPIEIKAPGVIYRKPVDTPLQTGIKAIDSMIPIGRGQRELIIGDRQTGKTAIAIDTIINQKGQGVYCIYVAIGQKKSAIARIIDKLRQYGALEYTTVVVASASDPATLQYIAPYAGCAMGEYFAYSGRDALVVYDDLSKHAVAYRQLSLLMRRPPGREAYPGDIFYLHSRLLERAVRLNDKLGGGSLTALPIVETQANDISAYIPTNVISITDGQIYLEPGLFYAGQRPAINVGLSVSRVGGAAQIKAMKQVAGMLRIELAQYRELETFAQFATELDPATRAQIVRGQRLMELLKQEQYSPMPVEEQVVVIFAGVRGYLDDLPVEAVRRFEKEFLRFMHEKHQDILDDIREKKELTPETEEKLKKAIEEFKAVFRV</sequence>
<accession>B9K7T9</accession>
<gene>
    <name evidence="1" type="primary">atpA</name>
    <name type="ordered locus">CTN_0846</name>
</gene>
<organism>
    <name type="scientific">Thermotoga neapolitana (strain ATCC 49049 / DSM 4359 / NBRC 107923 / NS-E)</name>
    <dbReference type="NCBI Taxonomy" id="309803"/>
    <lineage>
        <taxon>Bacteria</taxon>
        <taxon>Thermotogati</taxon>
        <taxon>Thermotogota</taxon>
        <taxon>Thermotogae</taxon>
        <taxon>Thermotogales</taxon>
        <taxon>Thermotogaceae</taxon>
        <taxon>Thermotoga</taxon>
    </lineage>
</organism>
<name>ATPA_THENN</name>
<comment type="function">
    <text evidence="1">Produces ATP from ADP in the presence of a proton gradient across the membrane. The alpha chain is a regulatory subunit.</text>
</comment>
<comment type="catalytic activity">
    <reaction evidence="1">
        <text>ATP + H2O + 4 H(+)(in) = ADP + phosphate + 5 H(+)(out)</text>
        <dbReference type="Rhea" id="RHEA:57720"/>
        <dbReference type="ChEBI" id="CHEBI:15377"/>
        <dbReference type="ChEBI" id="CHEBI:15378"/>
        <dbReference type="ChEBI" id="CHEBI:30616"/>
        <dbReference type="ChEBI" id="CHEBI:43474"/>
        <dbReference type="ChEBI" id="CHEBI:456216"/>
        <dbReference type="EC" id="7.1.2.2"/>
    </reaction>
</comment>
<comment type="subunit">
    <text evidence="1">F-type ATPases have 2 components, CF(1) - the catalytic core - and CF(0) - the membrane proton channel. CF(1) has five subunits: alpha(3), beta(3), gamma(1), delta(1), epsilon(1). CF(0) has three main subunits: a(1), b(2) and c(9-12). The alpha and beta chains form an alternating ring which encloses part of the gamma chain. CF(1) is attached to CF(0) by a central stalk formed by the gamma and epsilon chains, while a peripheral stalk is formed by the delta and b chains.</text>
</comment>
<comment type="subcellular location">
    <subcellularLocation>
        <location evidence="1">Cell inner membrane</location>
        <topology evidence="1">Peripheral membrane protein</topology>
    </subcellularLocation>
</comment>
<comment type="similarity">
    <text evidence="1">Belongs to the ATPase alpha/beta chains family.</text>
</comment>
<feature type="chain" id="PRO_1000166561" description="ATP synthase subunit alpha">
    <location>
        <begin position="1"/>
        <end position="503"/>
    </location>
</feature>
<feature type="binding site" evidence="1">
    <location>
        <begin position="170"/>
        <end position="177"/>
    </location>
    <ligand>
        <name>ATP</name>
        <dbReference type="ChEBI" id="CHEBI:30616"/>
    </ligand>
</feature>
<feature type="site" description="Required for activity" evidence="1">
    <location>
        <position position="363"/>
    </location>
</feature>
<keyword id="KW-0066">ATP synthesis</keyword>
<keyword id="KW-0067">ATP-binding</keyword>
<keyword id="KW-0997">Cell inner membrane</keyword>
<keyword id="KW-1003">Cell membrane</keyword>
<keyword id="KW-0139">CF(1)</keyword>
<keyword id="KW-0375">Hydrogen ion transport</keyword>
<keyword id="KW-0406">Ion transport</keyword>
<keyword id="KW-0472">Membrane</keyword>
<keyword id="KW-0547">Nucleotide-binding</keyword>
<keyword id="KW-1278">Translocase</keyword>
<keyword id="KW-0813">Transport</keyword>
<protein>
    <recommendedName>
        <fullName evidence="1">ATP synthase subunit alpha</fullName>
        <ecNumber evidence="1">7.1.2.2</ecNumber>
    </recommendedName>
    <alternativeName>
        <fullName evidence="1">ATP synthase F1 sector subunit alpha</fullName>
    </alternativeName>
    <alternativeName>
        <fullName evidence="1">F-ATPase subunit alpha</fullName>
    </alternativeName>
</protein>
<proteinExistence type="inferred from homology"/>
<dbReference type="EC" id="7.1.2.2" evidence="1"/>
<dbReference type="EMBL" id="CP000916">
    <property type="protein sequence ID" value="ACM23022.1"/>
    <property type="molecule type" value="Genomic_DNA"/>
</dbReference>
<dbReference type="RefSeq" id="WP_015919339.1">
    <property type="nucleotide sequence ID" value="NC_011978.1"/>
</dbReference>
<dbReference type="SMR" id="B9K7T9"/>
<dbReference type="STRING" id="309803.CTN_0846"/>
<dbReference type="KEGG" id="tna:CTN_0846"/>
<dbReference type="eggNOG" id="COG0056">
    <property type="taxonomic scope" value="Bacteria"/>
</dbReference>
<dbReference type="HOGENOM" id="CLU_010091_2_1_0"/>
<dbReference type="Proteomes" id="UP000000445">
    <property type="component" value="Chromosome"/>
</dbReference>
<dbReference type="GO" id="GO:0005886">
    <property type="term" value="C:plasma membrane"/>
    <property type="evidence" value="ECO:0007669"/>
    <property type="project" value="UniProtKB-SubCell"/>
</dbReference>
<dbReference type="GO" id="GO:0045259">
    <property type="term" value="C:proton-transporting ATP synthase complex"/>
    <property type="evidence" value="ECO:0007669"/>
    <property type="project" value="UniProtKB-KW"/>
</dbReference>
<dbReference type="GO" id="GO:0043531">
    <property type="term" value="F:ADP binding"/>
    <property type="evidence" value="ECO:0007669"/>
    <property type="project" value="TreeGrafter"/>
</dbReference>
<dbReference type="GO" id="GO:0005524">
    <property type="term" value="F:ATP binding"/>
    <property type="evidence" value="ECO:0007669"/>
    <property type="project" value="UniProtKB-UniRule"/>
</dbReference>
<dbReference type="GO" id="GO:0046933">
    <property type="term" value="F:proton-transporting ATP synthase activity, rotational mechanism"/>
    <property type="evidence" value="ECO:0007669"/>
    <property type="project" value="UniProtKB-UniRule"/>
</dbReference>
<dbReference type="CDD" id="cd18113">
    <property type="entry name" value="ATP-synt_F1_alpha_C"/>
    <property type="match status" value="1"/>
</dbReference>
<dbReference type="CDD" id="cd18116">
    <property type="entry name" value="ATP-synt_F1_alpha_N"/>
    <property type="match status" value="1"/>
</dbReference>
<dbReference type="CDD" id="cd01132">
    <property type="entry name" value="F1-ATPase_alpha_CD"/>
    <property type="match status" value="1"/>
</dbReference>
<dbReference type="FunFam" id="1.20.150.20:FF:000001">
    <property type="entry name" value="ATP synthase subunit alpha"/>
    <property type="match status" value="1"/>
</dbReference>
<dbReference type="FunFam" id="2.40.30.20:FF:000001">
    <property type="entry name" value="ATP synthase subunit alpha"/>
    <property type="match status" value="1"/>
</dbReference>
<dbReference type="FunFam" id="3.40.50.300:FF:000002">
    <property type="entry name" value="ATP synthase subunit alpha"/>
    <property type="match status" value="1"/>
</dbReference>
<dbReference type="Gene3D" id="2.40.30.20">
    <property type="match status" value="1"/>
</dbReference>
<dbReference type="Gene3D" id="1.20.150.20">
    <property type="entry name" value="ATP synthase alpha/beta chain, C-terminal domain"/>
    <property type="match status" value="1"/>
</dbReference>
<dbReference type="Gene3D" id="3.40.50.300">
    <property type="entry name" value="P-loop containing nucleotide triphosphate hydrolases"/>
    <property type="match status" value="1"/>
</dbReference>
<dbReference type="HAMAP" id="MF_01346">
    <property type="entry name" value="ATP_synth_alpha_bact"/>
    <property type="match status" value="1"/>
</dbReference>
<dbReference type="InterPro" id="IPR023366">
    <property type="entry name" value="ATP_synth_asu-like_sf"/>
</dbReference>
<dbReference type="InterPro" id="IPR000793">
    <property type="entry name" value="ATP_synth_asu_C"/>
</dbReference>
<dbReference type="InterPro" id="IPR038376">
    <property type="entry name" value="ATP_synth_asu_C_sf"/>
</dbReference>
<dbReference type="InterPro" id="IPR033732">
    <property type="entry name" value="ATP_synth_F1_a_nt-bd_dom"/>
</dbReference>
<dbReference type="InterPro" id="IPR005294">
    <property type="entry name" value="ATP_synth_F1_asu"/>
</dbReference>
<dbReference type="InterPro" id="IPR020003">
    <property type="entry name" value="ATPase_a/bsu_AS"/>
</dbReference>
<dbReference type="InterPro" id="IPR004100">
    <property type="entry name" value="ATPase_F1/V1/A1_a/bsu_N"/>
</dbReference>
<dbReference type="InterPro" id="IPR036121">
    <property type="entry name" value="ATPase_F1/V1/A1_a/bsu_N_sf"/>
</dbReference>
<dbReference type="InterPro" id="IPR000194">
    <property type="entry name" value="ATPase_F1/V1/A1_a/bsu_nucl-bd"/>
</dbReference>
<dbReference type="InterPro" id="IPR027417">
    <property type="entry name" value="P-loop_NTPase"/>
</dbReference>
<dbReference type="NCBIfam" id="TIGR00962">
    <property type="entry name" value="atpA"/>
    <property type="match status" value="1"/>
</dbReference>
<dbReference type="NCBIfam" id="NF009884">
    <property type="entry name" value="PRK13343.1"/>
    <property type="match status" value="1"/>
</dbReference>
<dbReference type="PANTHER" id="PTHR48082">
    <property type="entry name" value="ATP SYNTHASE SUBUNIT ALPHA, MITOCHONDRIAL"/>
    <property type="match status" value="1"/>
</dbReference>
<dbReference type="PANTHER" id="PTHR48082:SF2">
    <property type="entry name" value="ATP SYNTHASE SUBUNIT ALPHA, MITOCHONDRIAL"/>
    <property type="match status" value="1"/>
</dbReference>
<dbReference type="Pfam" id="PF00006">
    <property type="entry name" value="ATP-synt_ab"/>
    <property type="match status" value="1"/>
</dbReference>
<dbReference type="Pfam" id="PF00306">
    <property type="entry name" value="ATP-synt_ab_C"/>
    <property type="match status" value="1"/>
</dbReference>
<dbReference type="Pfam" id="PF02874">
    <property type="entry name" value="ATP-synt_ab_N"/>
    <property type="match status" value="1"/>
</dbReference>
<dbReference type="PIRSF" id="PIRSF039088">
    <property type="entry name" value="F_ATPase_subunit_alpha"/>
    <property type="match status" value="1"/>
</dbReference>
<dbReference type="SUPFAM" id="SSF47917">
    <property type="entry name" value="C-terminal domain of alpha and beta subunits of F1 ATP synthase"/>
    <property type="match status" value="1"/>
</dbReference>
<dbReference type="SUPFAM" id="SSF50615">
    <property type="entry name" value="N-terminal domain of alpha and beta subunits of F1 ATP synthase"/>
    <property type="match status" value="1"/>
</dbReference>
<dbReference type="SUPFAM" id="SSF52540">
    <property type="entry name" value="P-loop containing nucleoside triphosphate hydrolases"/>
    <property type="match status" value="1"/>
</dbReference>
<dbReference type="PROSITE" id="PS00152">
    <property type="entry name" value="ATPASE_ALPHA_BETA"/>
    <property type="match status" value="1"/>
</dbReference>